<reference key="1">
    <citation type="journal article" date="2006" name="Lancet">
        <title>Complete genome sequence of USA300, an epidemic clone of community-acquired meticillin-resistant Staphylococcus aureus.</title>
        <authorList>
            <person name="Diep B.A."/>
            <person name="Gill S.R."/>
            <person name="Chang R.F."/>
            <person name="Phan T.H."/>
            <person name="Chen J.H."/>
            <person name="Davidson M.G."/>
            <person name="Lin F."/>
            <person name="Lin J."/>
            <person name="Carleton H.A."/>
            <person name="Mongodin E.F."/>
            <person name="Sensabaugh G.F."/>
            <person name="Perdreau-Remington F."/>
        </authorList>
    </citation>
    <scope>NUCLEOTIDE SEQUENCE [LARGE SCALE GENOMIC DNA]</scope>
    <source>
        <strain>USA300</strain>
    </source>
</reference>
<accession>Q2FII7</accession>
<protein>
    <recommendedName>
        <fullName evidence="1">Glycine cleavage system H protein</fullName>
    </recommendedName>
    <alternativeName>
        <fullName evidence="1">Octanoyl/lipoyl carrier protein</fullName>
    </alternativeName>
</protein>
<keyword id="KW-0450">Lipoyl</keyword>
<name>GCSH_STAA3</name>
<comment type="function">
    <text evidence="1">The glycine cleavage system catalyzes the degradation of glycine. The H protein shuttles the methylamine group of glycine from the P protein to the T protein.</text>
</comment>
<comment type="function">
    <text evidence="1">Is also involved in protein lipoylation via its role as an octanoyl/lipoyl carrier protein intermediate.</text>
</comment>
<comment type="cofactor">
    <cofactor evidence="1">
        <name>(R)-lipoate</name>
        <dbReference type="ChEBI" id="CHEBI:83088"/>
    </cofactor>
    <text evidence="1">Binds 1 lipoyl cofactor covalently.</text>
</comment>
<comment type="subunit">
    <text evidence="1">The glycine cleavage system is composed of four proteins: P, T, L and H.</text>
</comment>
<comment type="similarity">
    <text evidence="1">Belongs to the GcvH family.</text>
</comment>
<feature type="chain" id="PRO_0000302444" description="Glycine cleavage system H protein">
    <location>
        <begin position="1"/>
        <end position="126"/>
    </location>
</feature>
<feature type="domain" description="Lipoyl-binding" evidence="2">
    <location>
        <begin position="22"/>
        <end position="104"/>
    </location>
</feature>
<feature type="modified residue" description="N6-lipoyllysine" evidence="1">
    <location>
        <position position="63"/>
    </location>
</feature>
<organism>
    <name type="scientific">Staphylococcus aureus (strain USA300)</name>
    <dbReference type="NCBI Taxonomy" id="367830"/>
    <lineage>
        <taxon>Bacteria</taxon>
        <taxon>Bacillati</taxon>
        <taxon>Bacillota</taxon>
        <taxon>Bacilli</taxon>
        <taxon>Bacillales</taxon>
        <taxon>Staphylococcaceae</taxon>
        <taxon>Staphylococcus</taxon>
    </lineage>
</organism>
<evidence type="ECO:0000255" key="1">
    <source>
        <dbReference type="HAMAP-Rule" id="MF_00272"/>
    </source>
</evidence>
<evidence type="ECO:0000255" key="2">
    <source>
        <dbReference type="PROSITE-ProRule" id="PRU01066"/>
    </source>
</evidence>
<dbReference type="EMBL" id="CP000255">
    <property type="protein sequence ID" value="ABD21827.1"/>
    <property type="molecule type" value="Genomic_DNA"/>
</dbReference>
<dbReference type="RefSeq" id="WP_000290485.1">
    <property type="nucleotide sequence ID" value="NZ_CP027476.1"/>
</dbReference>
<dbReference type="SMR" id="Q2FII7"/>
<dbReference type="KEGG" id="saa:SAUSA300_0791"/>
<dbReference type="HOGENOM" id="CLU_097408_2_2_9"/>
<dbReference type="OMA" id="KEHEWIR"/>
<dbReference type="Proteomes" id="UP000001939">
    <property type="component" value="Chromosome"/>
</dbReference>
<dbReference type="GO" id="GO:0005829">
    <property type="term" value="C:cytosol"/>
    <property type="evidence" value="ECO:0007669"/>
    <property type="project" value="TreeGrafter"/>
</dbReference>
<dbReference type="GO" id="GO:0005960">
    <property type="term" value="C:glycine cleavage complex"/>
    <property type="evidence" value="ECO:0007669"/>
    <property type="project" value="InterPro"/>
</dbReference>
<dbReference type="GO" id="GO:0019464">
    <property type="term" value="P:glycine decarboxylation via glycine cleavage system"/>
    <property type="evidence" value="ECO:0007669"/>
    <property type="project" value="UniProtKB-UniRule"/>
</dbReference>
<dbReference type="CDD" id="cd06848">
    <property type="entry name" value="GCS_H"/>
    <property type="match status" value="1"/>
</dbReference>
<dbReference type="Gene3D" id="2.40.50.100">
    <property type="match status" value="1"/>
</dbReference>
<dbReference type="HAMAP" id="MF_00272">
    <property type="entry name" value="GcvH"/>
    <property type="match status" value="1"/>
</dbReference>
<dbReference type="InterPro" id="IPR003016">
    <property type="entry name" value="2-oxoA_DH_lipoyl-BS"/>
</dbReference>
<dbReference type="InterPro" id="IPR000089">
    <property type="entry name" value="Biotin_lipoyl"/>
</dbReference>
<dbReference type="InterPro" id="IPR002930">
    <property type="entry name" value="GCV_H"/>
</dbReference>
<dbReference type="InterPro" id="IPR033753">
    <property type="entry name" value="GCV_H/Fam206"/>
</dbReference>
<dbReference type="InterPro" id="IPR017453">
    <property type="entry name" value="GCV_H_sub"/>
</dbReference>
<dbReference type="InterPro" id="IPR011053">
    <property type="entry name" value="Single_hybrid_motif"/>
</dbReference>
<dbReference type="NCBIfam" id="TIGR00527">
    <property type="entry name" value="gcvH"/>
    <property type="match status" value="1"/>
</dbReference>
<dbReference type="NCBIfam" id="NF002270">
    <property type="entry name" value="PRK01202.1"/>
    <property type="match status" value="1"/>
</dbReference>
<dbReference type="PANTHER" id="PTHR11715">
    <property type="entry name" value="GLYCINE CLEAVAGE SYSTEM H PROTEIN"/>
    <property type="match status" value="1"/>
</dbReference>
<dbReference type="PANTHER" id="PTHR11715:SF3">
    <property type="entry name" value="GLYCINE CLEAVAGE SYSTEM H PROTEIN-RELATED"/>
    <property type="match status" value="1"/>
</dbReference>
<dbReference type="Pfam" id="PF01597">
    <property type="entry name" value="GCV_H"/>
    <property type="match status" value="1"/>
</dbReference>
<dbReference type="SUPFAM" id="SSF51230">
    <property type="entry name" value="Single hybrid motif"/>
    <property type="match status" value="1"/>
</dbReference>
<dbReference type="PROSITE" id="PS50968">
    <property type="entry name" value="BIOTINYL_LIPOYL"/>
    <property type="match status" value="1"/>
</dbReference>
<dbReference type="PROSITE" id="PS00189">
    <property type="entry name" value="LIPOYL"/>
    <property type="match status" value="1"/>
</dbReference>
<proteinExistence type="inferred from homology"/>
<gene>
    <name evidence="1" type="primary">gcvH</name>
    <name type="ordered locus">SAUSA300_0791</name>
</gene>
<sequence length="126" mass="14093">MAVPNELKYSKEHEWVKVEGNVAIIGITEYAQSELGDIVFVELPETDDEINEGDTFGSVESVKTVSELYAPISGKVVEVNEELEDSPEFVNESPYEKAWMVKVEISDESQIEALLTAEKYSEMIGE</sequence>